<feature type="chain" id="PRO_0000139001" description="Multifunctional CCA protein">
    <location>
        <begin position="1"/>
        <end position="412"/>
    </location>
</feature>
<feature type="domain" description="HD" evidence="1">
    <location>
        <begin position="228"/>
        <end position="329"/>
    </location>
</feature>
<feature type="binding site" evidence="1">
    <location>
        <position position="8"/>
    </location>
    <ligand>
        <name>ATP</name>
        <dbReference type="ChEBI" id="CHEBI:30616"/>
    </ligand>
</feature>
<feature type="binding site" evidence="1">
    <location>
        <position position="8"/>
    </location>
    <ligand>
        <name>CTP</name>
        <dbReference type="ChEBI" id="CHEBI:37563"/>
    </ligand>
</feature>
<feature type="binding site" evidence="1">
    <location>
        <position position="11"/>
    </location>
    <ligand>
        <name>ATP</name>
        <dbReference type="ChEBI" id="CHEBI:30616"/>
    </ligand>
</feature>
<feature type="binding site" evidence="1">
    <location>
        <position position="11"/>
    </location>
    <ligand>
        <name>CTP</name>
        <dbReference type="ChEBI" id="CHEBI:37563"/>
    </ligand>
</feature>
<feature type="binding site" evidence="1">
    <location>
        <position position="21"/>
    </location>
    <ligand>
        <name>Mg(2+)</name>
        <dbReference type="ChEBI" id="CHEBI:18420"/>
    </ligand>
</feature>
<feature type="binding site" evidence="1">
    <location>
        <position position="23"/>
    </location>
    <ligand>
        <name>Mg(2+)</name>
        <dbReference type="ChEBI" id="CHEBI:18420"/>
    </ligand>
</feature>
<feature type="binding site" evidence="1">
    <location>
        <position position="91"/>
    </location>
    <ligand>
        <name>ATP</name>
        <dbReference type="ChEBI" id="CHEBI:30616"/>
    </ligand>
</feature>
<feature type="binding site" evidence="1">
    <location>
        <position position="91"/>
    </location>
    <ligand>
        <name>CTP</name>
        <dbReference type="ChEBI" id="CHEBI:37563"/>
    </ligand>
</feature>
<feature type="binding site" evidence="1">
    <location>
        <position position="137"/>
    </location>
    <ligand>
        <name>ATP</name>
        <dbReference type="ChEBI" id="CHEBI:30616"/>
    </ligand>
</feature>
<feature type="binding site" evidence="1">
    <location>
        <position position="137"/>
    </location>
    <ligand>
        <name>CTP</name>
        <dbReference type="ChEBI" id="CHEBI:37563"/>
    </ligand>
</feature>
<feature type="binding site" evidence="1">
    <location>
        <position position="140"/>
    </location>
    <ligand>
        <name>ATP</name>
        <dbReference type="ChEBI" id="CHEBI:30616"/>
    </ligand>
</feature>
<feature type="binding site" evidence="1">
    <location>
        <position position="140"/>
    </location>
    <ligand>
        <name>CTP</name>
        <dbReference type="ChEBI" id="CHEBI:37563"/>
    </ligand>
</feature>
<gene>
    <name evidence="1" type="primary">cca</name>
    <name type="ordered locus">SF3097</name>
    <name type="ordered locus">S3302</name>
</gene>
<accession>Q821A6</accession>
<accession>Q7BZV4</accession>
<keyword id="KW-0067">ATP-binding</keyword>
<keyword id="KW-0378">Hydrolase</keyword>
<keyword id="KW-0460">Magnesium</keyword>
<keyword id="KW-0479">Metal-binding</keyword>
<keyword id="KW-0511">Multifunctional enzyme</keyword>
<keyword id="KW-0533">Nickel</keyword>
<keyword id="KW-0547">Nucleotide-binding</keyword>
<keyword id="KW-0548">Nucleotidyltransferase</keyword>
<keyword id="KW-1185">Reference proteome</keyword>
<keyword id="KW-0692">RNA repair</keyword>
<keyword id="KW-0694">RNA-binding</keyword>
<keyword id="KW-0808">Transferase</keyword>
<keyword id="KW-0819">tRNA processing</keyword>
<proteinExistence type="inferred from homology"/>
<comment type="function">
    <text evidence="1">Catalyzes the addition and repair of the essential 3'-terminal CCA sequence in tRNAs without using a nucleic acid template. Adds these three nucleotides in the order of C, C, and A to the tRNA nucleotide-73, using CTP and ATP as substrates and producing inorganic pyrophosphate. tRNA 3'-terminal CCA addition is required both for tRNA processing and repair. Also involved in tRNA surveillance by mediating tandem CCA addition to generate a CCACCA at the 3' terminus of unstable tRNAs. While stable tRNAs receive only 3'-terminal CCA, unstable tRNAs are marked with CCACCA and rapidly degraded.</text>
</comment>
<comment type="catalytic activity">
    <reaction evidence="1">
        <text>a tRNA precursor + 2 CTP + ATP = a tRNA with a 3' CCA end + 3 diphosphate</text>
        <dbReference type="Rhea" id="RHEA:14433"/>
        <dbReference type="Rhea" id="RHEA-COMP:10465"/>
        <dbReference type="Rhea" id="RHEA-COMP:10468"/>
        <dbReference type="ChEBI" id="CHEBI:30616"/>
        <dbReference type="ChEBI" id="CHEBI:33019"/>
        <dbReference type="ChEBI" id="CHEBI:37563"/>
        <dbReference type="ChEBI" id="CHEBI:74896"/>
        <dbReference type="ChEBI" id="CHEBI:83071"/>
        <dbReference type="EC" id="2.7.7.72"/>
    </reaction>
</comment>
<comment type="catalytic activity">
    <reaction evidence="1">
        <text>a tRNA with a 3' CCA end + 2 CTP + ATP = a tRNA with a 3' CCACCA end + 3 diphosphate</text>
        <dbReference type="Rhea" id="RHEA:76235"/>
        <dbReference type="Rhea" id="RHEA-COMP:10468"/>
        <dbReference type="Rhea" id="RHEA-COMP:18655"/>
        <dbReference type="ChEBI" id="CHEBI:30616"/>
        <dbReference type="ChEBI" id="CHEBI:33019"/>
        <dbReference type="ChEBI" id="CHEBI:37563"/>
        <dbReference type="ChEBI" id="CHEBI:83071"/>
        <dbReference type="ChEBI" id="CHEBI:195187"/>
    </reaction>
    <physiologicalReaction direction="left-to-right" evidence="1">
        <dbReference type="Rhea" id="RHEA:76236"/>
    </physiologicalReaction>
</comment>
<comment type="cofactor">
    <cofactor evidence="1">
        <name>Mg(2+)</name>
        <dbReference type="ChEBI" id="CHEBI:18420"/>
    </cofactor>
    <text evidence="1">Magnesium is required for nucleotidyltransferase activity.</text>
</comment>
<comment type="cofactor">
    <cofactor evidence="1">
        <name>Ni(2+)</name>
        <dbReference type="ChEBI" id="CHEBI:49786"/>
    </cofactor>
    <text evidence="1">Nickel for phosphatase activity.</text>
</comment>
<comment type="subunit">
    <text evidence="1">Monomer. Can also form homodimers and oligomers.</text>
</comment>
<comment type="domain">
    <text evidence="1">Comprises two domains: an N-terminal domain containing the nucleotidyltransferase activity and a C-terminal HD domain associated with both phosphodiesterase and phosphatase activities.</text>
</comment>
<comment type="miscellaneous">
    <text evidence="1">A single active site specifically recognizes both ATP and CTP and is responsible for their addition.</text>
</comment>
<comment type="similarity">
    <text evidence="1">Belongs to the tRNA nucleotidyltransferase/poly(A) polymerase family. Bacterial CCA-adding enzyme type 1 subfamily.</text>
</comment>
<name>CCA_SHIFL</name>
<evidence type="ECO:0000255" key="1">
    <source>
        <dbReference type="HAMAP-Rule" id="MF_01261"/>
    </source>
</evidence>
<protein>
    <recommendedName>
        <fullName evidence="1">Multifunctional CCA protein</fullName>
    </recommendedName>
    <domain>
        <recommendedName>
            <fullName evidence="1">CCA-adding enzyme</fullName>
            <ecNumber evidence="1">2.7.7.72</ecNumber>
        </recommendedName>
        <alternativeName>
            <fullName evidence="1">CCA tRNA nucleotidyltransferase</fullName>
        </alternativeName>
        <alternativeName>
            <fullName evidence="1">tRNA CCA-pyrophosphorylase</fullName>
        </alternativeName>
        <alternativeName>
            <fullName evidence="1">tRNA adenylyl-/cytidylyl-transferase</fullName>
        </alternativeName>
        <alternativeName>
            <fullName evidence="1">tRNA nucleotidyltransferase</fullName>
        </alternativeName>
        <alternativeName>
            <fullName evidence="1">tRNA-NT</fullName>
        </alternativeName>
    </domain>
    <domain>
        <recommendedName>
            <fullName evidence="1">2'-nucleotidase</fullName>
            <ecNumber evidence="1">3.1.3.-</ecNumber>
        </recommendedName>
    </domain>
    <domain>
        <recommendedName>
            <fullName evidence="1">2',3'-cyclic phosphodiesterase</fullName>
            <ecNumber evidence="1">3.1.4.-</ecNumber>
        </recommendedName>
    </domain>
    <domain>
        <recommendedName>
            <fullName evidence="1">Phosphatase</fullName>
            <ecNumber evidence="1">3.1.3.-</ecNumber>
        </recommendedName>
    </domain>
</protein>
<dbReference type="EC" id="2.7.7.72" evidence="1"/>
<dbReference type="EC" id="3.1.3.-" evidence="1"/>
<dbReference type="EC" id="3.1.4.-" evidence="1"/>
<dbReference type="EMBL" id="AE005674">
    <property type="protein sequence ID" value="AAN44573.1"/>
    <property type="molecule type" value="Genomic_DNA"/>
</dbReference>
<dbReference type="EMBL" id="AE014073">
    <property type="protein sequence ID" value="AAP18385.1"/>
    <property type="molecule type" value="Genomic_DNA"/>
</dbReference>
<dbReference type="RefSeq" id="NP_708866.1">
    <property type="nucleotide sequence ID" value="NC_004337.2"/>
</dbReference>
<dbReference type="RefSeq" id="WP_000708530.1">
    <property type="nucleotide sequence ID" value="NZ_UIPU01000064.1"/>
</dbReference>
<dbReference type="SMR" id="Q821A6"/>
<dbReference type="STRING" id="198214.SF3097"/>
<dbReference type="PaxDb" id="198214-SF3097"/>
<dbReference type="GeneID" id="1026690"/>
<dbReference type="KEGG" id="sfl:SF3097"/>
<dbReference type="KEGG" id="sfx:S3302"/>
<dbReference type="PATRIC" id="fig|198214.7.peg.3675"/>
<dbReference type="HOGENOM" id="CLU_015961_1_1_6"/>
<dbReference type="Proteomes" id="UP000001006">
    <property type="component" value="Chromosome"/>
</dbReference>
<dbReference type="Proteomes" id="UP000002673">
    <property type="component" value="Chromosome"/>
</dbReference>
<dbReference type="GO" id="GO:0005524">
    <property type="term" value="F:ATP binding"/>
    <property type="evidence" value="ECO:0007669"/>
    <property type="project" value="UniProtKB-UniRule"/>
</dbReference>
<dbReference type="GO" id="GO:0004810">
    <property type="term" value="F:CCA tRNA nucleotidyltransferase activity"/>
    <property type="evidence" value="ECO:0007669"/>
    <property type="project" value="UniProtKB-UniRule"/>
</dbReference>
<dbReference type="GO" id="GO:0004112">
    <property type="term" value="F:cyclic-nucleotide phosphodiesterase activity"/>
    <property type="evidence" value="ECO:0007669"/>
    <property type="project" value="UniProtKB-UniRule"/>
</dbReference>
<dbReference type="GO" id="GO:0000287">
    <property type="term" value="F:magnesium ion binding"/>
    <property type="evidence" value="ECO:0007669"/>
    <property type="project" value="UniProtKB-UniRule"/>
</dbReference>
<dbReference type="GO" id="GO:0016791">
    <property type="term" value="F:phosphatase activity"/>
    <property type="evidence" value="ECO:0007669"/>
    <property type="project" value="UniProtKB-UniRule"/>
</dbReference>
<dbReference type="GO" id="GO:0000049">
    <property type="term" value="F:tRNA binding"/>
    <property type="evidence" value="ECO:0007669"/>
    <property type="project" value="UniProtKB-UniRule"/>
</dbReference>
<dbReference type="GO" id="GO:0042245">
    <property type="term" value="P:RNA repair"/>
    <property type="evidence" value="ECO:0007669"/>
    <property type="project" value="UniProtKB-KW"/>
</dbReference>
<dbReference type="GO" id="GO:0001680">
    <property type="term" value="P:tRNA 3'-terminal CCA addition"/>
    <property type="evidence" value="ECO:0007669"/>
    <property type="project" value="UniProtKB-UniRule"/>
</dbReference>
<dbReference type="CDD" id="cd00077">
    <property type="entry name" value="HDc"/>
    <property type="match status" value="1"/>
</dbReference>
<dbReference type="CDD" id="cd05398">
    <property type="entry name" value="NT_ClassII-CCAase"/>
    <property type="match status" value="1"/>
</dbReference>
<dbReference type="FunFam" id="1.10.3090.10:FF:000001">
    <property type="entry name" value="Multifunctional CCA protein"/>
    <property type="match status" value="1"/>
</dbReference>
<dbReference type="FunFam" id="3.30.460.10:FF:000016">
    <property type="entry name" value="Multifunctional CCA protein"/>
    <property type="match status" value="1"/>
</dbReference>
<dbReference type="Gene3D" id="3.30.460.10">
    <property type="entry name" value="Beta Polymerase, domain 2"/>
    <property type="match status" value="1"/>
</dbReference>
<dbReference type="Gene3D" id="1.10.3090.10">
    <property type="entry name" value="cca-adding enzyme, domain 2"/>
    <property type="match status" value="1"/>
</dbReference>
<dbReference type="HAMAP" id="MF_01261">
    <property type="entry name" value="CCA_bact_type1"/>
    <property type="match status" value="1"/>
</dbReference>
<dbReference type="HAMAP" id="MF_01262">
    <property type="entry name" value="CCA_bact_type2"/>
    <property type="match status" value="1"/>
</dbReference>
<dbReference type="InterPro" id="IPR012006">
    <property type="entry name" value="CCA_bact"/>
</dbReference>
<dbReference type="InterPro" id="IPR003607">
    <property type="entry name" value="HD/PDEase_dom"/>
</dbReference>
<dbReference type="InterPro" id="IPR006674">
    <property type="entry name" value="HD_domain"/>
</dbReference>
<dbReference type="InterPro" id="IPR043519">
    <property type="entry name" value="NT_sf"/>
</dbReference>
<dbReference type="InterPro" id="IPR002646">
    <property type="entry name" value="PolA_pol_head_dom"/>
</dbReference>
<dbReference type="InterPro" id="IPR032828">
    <property type="entry name" value="PolyA_RNA-bd"/>
</dbReference>
<dbReference type="InterPro" id="IPR050124">
    <property type="entry name" value="tRNA_CCA-adding_enzyme"/>
</dbReference>
<dbReference type="NCBIfam" id="NF008137">
    <property type="entry name" value="PRK10885.1"/>
    <property type="match status" value="1"/>
</dbReference>
<dbReference type="PANTHER" id="PTHR47545">
    <property type="entry name" value="MULTIFUNCTIONAL CCA PROTEIN"/>
    <property type="match status" value="1"/>
</dbReference>
<dbReference type="PANTHER" id="PTHR47545:SF1">
    <property type="entry name" value="MULTIFUNCTIONAL CCA PROTEIN"/>
    <property type="match status" value="1"/>
</dbReference>
<dbReference type="Pfam" id="PF01966">
    <property type="entry name" value="HD"/>
    <property type="match status" value="1"/>
</dbReference>
<dbReference type="Pfam" id="PF01743">
    <property type="entry name" value="PolyA_pol"/>
    <property type="match status" value="1"/>
</dbReference>
<dbReference type="Pfam" id="PF12627">
    <property type="entry name" value="PolyA_pol_RNAbd"/>
    <property type="match status" value="1"/>
</dbReference>
<dbReference type="PIRSF" id="PIRSF000813">
    <property type="entry name" value="CCA_bact"/>
    <property type="match status" value="1"/>
</dbReference>
<dbReference type="SUPFAM" id="SSF81301">
    <property type="entry name" value="Nucleotidyltransferase"/>
    <property type="match status" value="1"/>
</dbReference>
<dbReference type="SUPFAM" id="SSF81891">
    <property type="entry name" value="Poly A polymerase C-terminal region-like"/>
    <property type="match status" value="1"/>
</dbReference>
<dbReference type="PROSITE" id="PS51831">
    <property type="entry name" value="HD"/>
    <property type="match status" value="1"/>
</dbReference>
<organism>
    <name type="scientific">Shigella flexneri</name>
    <dbReference type="NCBI Taxonomy" id="623"/>
    <lineage>
        <taxon>Bacteria</taxon>
        <taxon>Pseudomonadati</taxon>
        <taxon>Pseudomonadota</taxon>
        <taxon>Gammaproteobacteria</taxon>
        <taxon>Enterobacterales</taxon>
        <taxon>Enterobacteriaceae</taxon>
        <taxon>Shigella</taxon>
    </lineage>
</organism>
<reference key="1">
    <citation type="journal article" date="2002" name="Nucleic Acids Res.">
        <title>Genome sequence of Shigella flexneri 2a: insights into pathogenicity through comparison with genomes of Escherichia coli K12 and O157.</title>
        <authorList>
            <person name="Jin Q."/>
            <person name="Yuan Z."/>
            <person name="Xu J."/>
            <person name="Wang Y."/>
            <person name="Shen Y."/>
            <person name="Lu W."/>
            <person name="Wang J."/>
            <person name="Liu H."/>
            <person name="Yang J."/>
            <person name="Yang F."/>
            <person name="Zhang X."/>
            <person name="Zhang J."/>
            <person name="Yang G."/>
            <person name="Wu H."/>
            <person name="Qu D."/>
            <person name="Dong J."/>
            <person name="Sun L."/>
            <person name="Xue Y."/>
            <person name="Zhao A."/>
            <person name="Gao Y."/>
            <person name="Zhu J."/>
            <person name="Kan B."/>
            <person name="Ding K."/>
            <person name="Chen S."/>
            <person name="Cheng H."/>
            <person name="Yao Z."/>
            <person name="He B."/>
            <person name="Chen R."/>
            <person name="Ma D."/>
            <person name="Qiang B."/>
            <person name="Wen Y."/>
            <person name="Hou Y."/>
            <person name="Yu J."/>
        </authorList>
    </citation>
    <scope>NUCLEOTIDE SEQUENCE [LARGE SCALE GENOMIC DNA]</scope>
    <source>
        <strain>301 / Serotype 2a</strain>
    </source>
</reference>
<reference key="2">
    <citation type="journal article" date="2003" name="Infect. Immun.">
        <title>Complete genome sequence and comparative genomics of Shigella flexneri serotype 2a strain 2457T.</title>
        <authorList>
            <person name="Wei J."/>
            <person name="Goldberg M.B."/>
            <person name="Burland V."/>
            <person name="Venkatesan M.M."/>
            <person name="Deng W."/>
            <person name="Fournier G."/>
            <person name="Mayhew G.F."/>
            <person name="Plunkett G. III"/>
            <person name="Rose D.J."/>
            <person name="Darling A."/>
            <person name="Mau B."/>
            <person name="Perna N.T."/>
            <person name="Payne S.M."/>
            <person name="Runyen-Janecky L.J."/>
            <person name="Zhou S."/>
            <person name="Schwartz D.C."/>
            <person name="Blattner F.R."/>
        </authorList>
    </citation>
    <scope>NUCLEOTIDE SEQUENCE [LARGE SCALE GENOMIC DNA]</scope>
    <source>
        <strain>ATCC 700930 / 2457T / Serotype 2a</strain>
    </source>
</reference>
<sequence>MKIYLVGGAVRDALLGLSVKDRDWVVVGSTPQEMLDAGYQQVGRDFPVFLHPQTHEEYALARTERKSGSGYTGFTCYTAPDVTLEDDLKRRDLTINALAQDDNGEIIDPYNGLGDLQNRLLRHVSPAFGEDPLRVLRVARFAARYAHLGFRIADETLTLMREMTHAGELEHLTPERVWKETESALTTRNPQVFFQVLRDCGALRVLFPEIDALFGVPAPARWHPEIDTGIHTLMTLSMAAMLSPQVDVRFATLCHDLGKGLTPPELWPRHHGHGPAGVKLVEQLCQRLRVPNEIRDLARLVAEFHDLIRTFPMLNPKTIVKLFDSIDAWRKPQRVEQLALTSEADVRGRTGFESADYPQGRWLREGWEVAQSVPTKAVVEAGFKGVEIREELTRRRIAAVASWKEQRCPKPD</sequence>